<proteinExistence type="inferred from homology"/>
<feature type="chain" id="PRO_0000153314" description="Histidinol-phosphate aminotransferase">
    <location>
        <begin position="1"/>
        <end position="346"/>
    </location>
</feature>
<feature type="modified residue" description="N6-(pyridoxal phosphate)lysine" evidence="1">
    <location>
        <position position="206"/>
    </location>
</feature>
<reference key="1">
    <citation type="journal article" date="2003" name="Science">
        <title>A genomic view of the human-Bacteroides thetaiotaomicron symbiosis.</title>
        <authorList>
            <person name="Xu J."/>
            <person name="Bjursell M.K."/>
            <person name="Himrod J."/>
            <person name="Deng S."/>
            <person name="Carmichael L.K."/>
            <person name="Chiang H.C."/>
            <person name="Hooper L.V."/>
            <person name="Gordon J.I."/>
        </authorList>
    </citation>
    <scope>NUCLEOTIDE SEQUENCE [LARGE SCALE GENOMIC DNA]</scope>
    <source>
        <strain>ATCC 29148 / DSM 2079 / JCM 5827 / CCUG 10774 / NCTC 10582 / VPI-5482 / E50</strain>
    </source>
</reference>
<accession>Q8ABA8</accession>
<protein>
    <recommendedName>
        <fullName evidence="1">Histidinol-phosphate aminotransferase</fullName>
        <ecNumber evidence="1">2.6.1.9</ecNumber>
    </recommendedName>
    <alternativeName>
        <fullName evidence="1">Imidazole acetol-phosphate transaminase</fullName>
    </alternativeName>
</protein>
<evidence type="ECO:0000255" key="1">
    <source>
        <dbReference type="HAMAP-Rule" id="MF_01023"/>
    </source>
</evidence>
<sequence>MKTLQELTRPNIWKLKPYSSARDEYKGAVASVFLDANENPYNLPHNRYPDPMQWELKTLLSKIKKVSPQHIFLGNGSDEAIDLVFRAFCEPEKDNVVAIDPTYGMYQVCADVNNVEYRKVLLDENFQFSAEKLLAATDERTKLIFLCSPNNPTGNDLLRSEIEKILREFEGLVILDEAYNDFSEAPSFLEELDKYPNLVVFQTFSKAWGCAAIRLGMAFASEAIIGILSKIKYPYNVNQLTQQQAIAMLHKYYEIERWIKTLKEERDYLEEEFAKLSCTVRMYPSDSNFFLAKVTDAVKIYNYLVGEGIIVRNRHSISLCCNCLRVTVGTRVENNTLLAALKKYQG</sequence>
<name>HIS8_BACTN</name>
<dbReference type="EC" id="2.6.1.9" evidence="1"/>
<dbReference type="EMBL" id="AE015928">
    <property type="protein sequence ID" value="AAO75309.1"/>
    <property type="molecule type" value="Genomic_DNA"/>
</dbReference>
<dbReference type="RefSeq" id="NP_809115.1">
    <property type="nucleotide sequence ID" value="NC_004663.1"/>
</dbReference>
<dbReference type="RefSeq" id="WP_008766231.1">
    <property type="nucleotide sequence ID" value="NC_004663.1"/>
</dbReference>
<dbReference type="SMR" id="Q8ABA8"/>
<dbReference type="FunCoup" id="Q8ABA8">
    <property type="interactions" value="464"/>
</dbReference>
<dbReference type="STRING" id="226186.BT_0202"/>
<dbReference type="PaxDb" id="226186-BT_0202"/>
<dbReference type="EnsemblBacteria" id="AAO75309">
    <property type="protein sequence ID" value="AAO75309"/>
    <property type="gene ID" value="BT_0202"/>
</dbReference>
<dbReference type="GeneID" id="60926166"/>
<dbReference type="KEGG" id="bth:BT_0202"/>
<dbReference type="PATRIC" id="fig|226186.12.peg.200"/>
<dbReference type="eggNOG" id="COG0079">
    <property type="taxonomic scope" value="Bacteria"/>
</dbReference>
<dbReference type="HOGENOM" id="CLU_017584_3_1_10"/>
<dbReference type="InParanoid" id="Q8ABA8"/>
<dbReference type="OrthoDB" id="9813612at2"/>
<dbReference type="UniPathway" id="UPA00031">
    <property type="reaction ID" value="UER00012"/>
</dbReference>
<dbReference type="Proteomes" id="UP000001414">
    <property type="component" value="Chromosome"/>
</dbReference>
<dbReference type="GO" id="GO:0004400">
    <property type="term" value="F:histidinol-phosphate transaminase activity"/>
    <property type="evidence" value="ECO:0007669"/>
    <property type="project" value="UniProtKB-UniRule"/>
</dbReference>
<dbReference type="GO" id="GO:0030170">
    <property type="term" value="F:pyridoxal phosphate binding"/>
    <property type="evidence" value="ECO:0007669"/>
    <property type="project" value="InterPro"/>
</dbReference>
<dbReference type="GO" id="GO:0000105">
    <property type="term" value="P:L-histidine biosynthetic process"/>
    <property type="evidence" value="ECO:0007669"/>
    <property type="project" value="UniProtKB-UniRule"/>
</dbReference>
<dbReference type="CDD" id="cd00609">
    <property type="entry name" value="AAT_like"/>
    <property type="match status" value="1"/>
</dbReference>
<dbReference type="Gene3D" id="3.90.1150.10">
    <property type="entry name" value="Aspartate Aminotransferase, domain 1"/>
    <property type="match status" value="1"/>
</dbReference>
<dbReference type="Gene3D" id="3.40.640.10">
    <property type="entry name" value="Type I PLP-dependent aspartate aminotransferase-like (Major domain)"/>
    <property type="match status" value="1"/>
</dbReference>
<dbReference type="HAMAP" id="MF_01023">
    <property type="entry name" value="HisC_aminotrans_2"/>
    <property type="match status" value="1"/>
</dbReference>
<dbReference type="InterPro" id="IPR001917">
    <property type="entry name" value="Aminotrans_II_pyridoxalP_BS"/>
</dbReference>
<dbReference type="InterPro" id="IPR004839">
    <property type="entry name" value="Aminotransferase_I/II_large"/>
</dbReference>
<dbReference type="InterPro" id="IPR005861">
    <property type="entry name" value="HisP_aminotrans"/>
</dbReference>
<dbReference type="InterPro" id="IPR015424">
    <property type="entry name" value="PyrdxlP-dep_Trfase"/>
</dbReference>
<dbReference type="InterPro" id="IPR015421">
    <property type="entry name" value="PyrdxlP-dep_Trfase_major"/>
</dbReference>
<dbReference type="InterPro" id="IPR015422">
    <property type="entry name" value="PyrdxlP-dep_Trfase_small"/>
</dbReference>
<dbReference type="NCBIfam" id="TIGR01141">
    <property type="entry name" value="hisC"/>
    <property type="match status" value="1"/>
</dbReference>
<dbReference type="PANTHER" id="PTHR42885:SF2">
    <property type="entry name" value="HISTIDINOL-PHOSPHATE AMINOTRANSFERASE"/>
    <property type="match status" value="1"/>
</dbReference>
<dbReference type="PANTHER" id="PTHR42885">
    <property type="entry name" value="HISTIDINOL-PHOSPHATE AMINOTRANSFERASE-RELATED"/>
    <property type="match status" value="1"/>
</dbReference>
<dbReference type="Pfam" id="PF00155">
    <property type="entry name" value="Aminotran_1_2"/>
    <property type="match status" value="1"/>
</dbReference>
<dbReference type="SUPFAM" id="SSF53383">
    <property type="entry name" value="PLP-dependent transferases"/>
    <property type="match status" value="1"/>
</dbReference>
<dbReference type="PROSITE" id="PS00599">
    <property type="entry name" value="AA_TRANSFER_CLASS_2"/>
    <property type="match status" value="1"/>
</dbReference>
<gene>
    <name evidence="1" type="primary">hisC</name>
    <name type="ordered locus">BT_0202</name>
</gene>
<comment type="catalytic activity">
    <reaction evidence="1">
        <text>L-histidinol phosphate + 2-oxoglutarate = 3-(imidazol-4-yl)-2-oxopropyl phosphate + L-glutamate</text>
        <dbReference type="Rhea" id="RHEA:23744"/>
        <dbReference type="ChEBI" id="CHEBI:16810"/>
        <dbReference type="ChEBI" id="CHEBI:29985"/>
        <dbReference type="ChEBI" id="CHEBI:57766"/>
        <dbReference type="ChEBI" id="CHEBI:57980"/>
        <dbReference type="EC" id="2.6.1.9"/>
    </reaction>
</comment>
<comment type="cofactor">
    <cofactor evidence="1">
        <name>pyridoxal 5'-phosphate</name>
        <dbReference type="ChEBI" id="CHEBI:597326"/>
    </cofactor>
</comment>
<comment type="pathway">
    <text evidence="1">Amino-acid biosynthesis; L-histidine biosynthesis; L-histidine from 5-phospho-alpha-D-ribose 1-diphosphate: step 7/9.</text>
</comment>
<comment type="subunit">
    <text evidence="1">Homodimer.</text>
</comment>
<comment type="similarity">
    <text evidence="1">Belongs to the class-II pyridoxal-phosphate-dependent aminotransferase family. Histidinol-phosphate aminotransferase subfamily.</text>
</comment>
<keyword id="KW-0028">Amino-acid biosynthesis</keyword>
<keyword id="KW-0032">Aminotransferase</keyword>
<keyword id="KW-0368">Histidine biosynthesis</keyword>
<keyword id="KW-0663">Pyridoxal phosphate</keyword>
<keyword id="KW-1185">Reference proteome</keyword>
<keyword id="KW-0808">Transferase</keyword>
<organism>
    <name type="scientific">Bacteroides thetaiotaomicron (strain ATCC 29148 / DSM 2079 / JCM 5827 / CCUG 10774 / NCTC 10582 / VPI-5482 / E50)</name>
    <dbReference type="NCBI Taxonomy" id="226186"/>
    <lineage>
        <taxon>Bacteria</taxon>
        <taxon>Pseudomonadati</taxon>
        <taxon>Bacteroidota</taxon>
        <taxon>Bacteroidia</taxon>
        <taxon>Bacteroidales</taxon>
        <taxon>Bacteroidaceae</taxon>
        <taxon>Bacteroides</taxon>
    </lineage>
</organism>